<organism>
    <name type="scientific">Schizosaccharomyces pombe (strain 972 / ATCC 24843)</name>
    <name type="common">Fission yeast</name>
    <dbReference type="NCBI Taxonomy" id="284812"/>
    <lineage>
        <taxon>Eukaryota</taxon>
        <taxon>Fungi</taxon>
        <taxon>Dikarya</taxon>
        <taxon>Ascomycota</taxon>
        <taxon>Taphrinomycotina</taxon>
        <taxon>Schizosaccharomycetes</taxon>
        <taxon>Schizosaccharomycetales</taxon>
        <taxon>Schizosaccharomycetaceae</taxon>
        <taxon>Schizosaccharomyces</taxon>
    </lineage>
</organism>
<name>RAF2_SCHPO</name>
<keyword id="KW-0156">Chromatin regulator</keyword>
<keyword id="KW-0158">Chromosome</keyword>
<keyword id="KW-0963">Cytoplasm</keyword>
<keyword id="KW-0903">Direct protein sequencing</keyword>
<keyword id="KW-0496">Mitochondrion</keyword>
<keyword id="KW-0539">Nucleus</keyword>
<keyword id="KW-1185">Reference proteome</keyword>
<keyword id="KW-0804">Transcription</keyword>
<keyword id="KW-0805">Transcription regulation</keyword>
<feature type="chain" id="PRO_0000116561" description="Rik1-associated factor 2">
    <location>
        <begin position="1"/>
        <end position="636"/>
    </location>
</feature>
<comment type="function">
    <text evidence="1 2 3 5 6">Component of the Clr4 methyltransferase complex (ClrC) which contributes to the establishment of heterochromatin by specifically methylating histone H3 to form H3K9me (PubMed:16024659, PubMed:16040243, PubMed:16157682). ClrC preferentially ubiquitylates H3K14 and ClrC-mediated H3 ubiquitination promotes clr4 methyltransferase activity for the methylation of H3K9 (PubMed:31468675). H3K9me represents a specific tag for epigenetic transcriptional repression by recruiting swi6/HP1 to methylated histones which leads to transcriptional silencing within centromeric heterochromatin, telomeric regions and at the silent mating-type loci (PubMed:16024659, PubMed:16040243, PubMed:16157682, PubMed:18345014). Has a role in both mitotic and meiotic chromosome segregation (PubMed:16040243).</text>
</comment>
<comment type="subunit">
    <text evidence="1 3">Component of the Clr4 methyltransferase complex (ClrC) composed of at least clr4, rik1, pcu4, rbx1, raf1 and raf2. The cullin pcu4, rik1, raf1, raf2 and the ring-box protein rbx1 are components of an E3 ubiquitin ligase, whose activity is essential for heterochromatin assembly (PubMed:16024659). Interacts with pcu4 (PubMed:16157682).</text>
</comment>
<comment type="interaction">
    <interactant intactId="EBI-904886">
        <id>O74560</id>
    </interactant>
    <interactant intactId="EBI-15934093">
        <id>Q9UTR1</id>
        <label>mms19</label>
    </interactant>
    <organismsDiffer>false</organismsDiffer>
    <experiments>2</experiments>
</comment>
<comment type="interaction">
    <interactant intactId="EBI-904886">
        <id>O74560</id>
    </interactant>
    <interactant intactId="EBI-876811">
        <id>P87154</id>
        <label>pol2</label>
    </interactant>
    <organismsDiffer>false</organismsDiffer>
    <experiments>2</experiments>
</comment>
<comment type="interaction">
    <interactant intactId="EBI-904886">
        <id>O74560</id>
    </interactant>
    <interactant intactId="EBI-2651917">
        <id>O94276</id>
        <label>SPBP8B7.28c</label>
    </interactant>
    <organismsDiffer>false</organismsDiffer>
    <experiments>3</experiments>
</comment>
<comment type="subcellular location">
    <subcellularLocation>
        <location evidence="4">Cytoplasm</location>
    </subcellularLocation>
    <subcellularLocation>
        <location evidence="4">Mitochondrion</location>
    </subcellularLocation>
    <subcellularLocation>
        <location evidence="2 4 5">Nucleus</location>
    </subcellularLocation>
    <subcellularLocation>
        <location evidence="2 5">Chromosome</location>
    </subcellularLocation>
</comment>
<reference key="1">
    <citation type="journal article" date="2002" name="Nature">
        <title>The genome sequence of Schizosaccharomyces pombe.</title>
        <authorList>
            <person name="Wood V."/>
            <person name="Gwilliam R."/>
            <person name="Rajandream M.A."/>
            <person name="Lyne M.H."/>
            <person name="Lyne R."/>
            <person name="Stewart A."/>
            <person name="Sgouros J.G."/>
            <person name="Peat N."/>
            <person name="Hayles J."/>
            <person name="Baker S.G."/>
            <person name="Basham D."/>
            <person name="Bowman S."/>
            <person name="Brooks K."/>
            <person name="Brown D."/>
            <person name="Brown S."/>
            <person name="Chillingworth T."/>
            <person name="Churcher C.M."/>
            <person name="Collins M."/>
            <person name="Connor R."/>
            <person name="Cronin A."/>
            <person name="Davis P."/>
            <person name="Feltwell T."/>
            <person name="Fraser A."/>
            <person name="Gentles S."/>
            <person name="Goble A."/>
            <person name="Hamlin N."/>
            <person name="Harris D.E."/>
            <person name="Hidalgo J."/>
            <person name="Hodgson G."/>
            <person name="Holroyd S."/>
            <person name="Hornsby T."/>
            <person name="Howarth S."/>
            <person name="Huckle E.J."/>
            <person name="Hunt S."/>
            <person name="Jagels K."/>
            <person name="James K.D."/>
            <person name="Jones L."/>
            <person name="Jones M."/>
            <person name="Leather S."/>
            <person name="McDonald S."/>
            <person name="McLean J."/>
            <person name="Mooney P."/>
            <person name="Moule S."/>
            <person name="Mungall K.L."/>
            <person name="Murphy L.D."/>
            <person name="Niblett D."/>
            <person name="Odell C."/>
            <person name="Oliver K."/>
            <person name="O'Neil S."/>
            <person name="Pearson D."/>
            <person name="Quail M.A."/>
            <person name="Rabbinowitsch E."/>
            <person name="Rutherford K.M."/>
            <person name="Rutter S."/>
            <person name="Saunders D."/>
            <person name="Seeger K."/>
            <person name="Sharp S."/>
            <person name="Skelton J."/>
            <person name="Simmonds M.N."/>
            <person name="Squares R."/>
            <person name="Squares S."/>
            <person name="Stevens K."/>
            <person name="Taylor K."/>
            <person name="Taylor R.G."/>
            <person name="Tivey A."/>
            <person name="Walsh S.V."/>
            <person name="Warren T."/>
            <person name="Whitehead S."/>
            <person name="Woodward J.R."/>
            <person name="Volckaert G."/>
            <person name="Aert R."/>
            <person name="Robben J."/>
            <person name="Grymonprez B."/>
            <person name="Weltjens I."/>
            <person name="Vanstreels E."/>
            <person name="Rieger M."/>
            <person name="Schaefer M."/>
            <person name="Mueller-Auer S."/>
            <person name="Gabel C."/>
            <person name="Fuchs M."/>
            <person name="Duesterhoeft A."/>
            <person name="Fritzc C."/>
            <person name="Holzer E."/>
            <person name="Moestl D."/>
            <person name="Hilbert H."/>
            <person name="Borzym K."/>
            <person name="Langer I."/>
            <person name="Beck A."/>
            <person name="Lehrach H."/>
            <person name="Reinhardt R."/>
            <person name="Pohl T.M."/>
            <person name="Eger P."/>
            <person name="Zimmermann W."/>
            <person name="Wedler H."/>
            <person name="Wambutt R."/>
            <person name="Purnelle B."/>
            <person name="Goffeau A."/>
            <person name="Cadieu E."/>
            <person name="Dreano S."/>
            <person name="Gloux S."/>
            <person name="Lelaure V."/>
            <person name="Mottier S."/>
            <person name="Galibert F."/>
            <person name="Aves S.J."/>
            <person name="Xiang Z."/>
            <person name="Hunt C."/>
            <person name="Moore K."/>
            <person name="Hurst S.M."/>
            <person name="Lucas M."/>
            <person name="Rochet M."/>
            <person name="Gaillardin C."/>
            <person name="Tallada V.A."/>
            <person name="Garzon A."/>
            <person name="Thode G."/>
            <person name="Daga R.R."/>
            <person name="Cruzado L."/>
            <person name="Jimenez J."/>
            <person name="Sanchez M."/>
            <person name="del Rey F."/>
            <person name="Benito J."/>
            <person name="Dominguez A."/>
            <person name="Revuelta J.L."/>
            <person name="Moreno S."/>
            <person name="Armstrong J."/>
            <person name="Forsburg S.L."/>
            <person name="Cerutti L."/>
            <person name="Lowe T."/>
            <person name="McCombie W.R."/>
            <person name="Paulsen I."/>
            <person name="Potashkin J."/>
            <person name="Shpakovski G.V."/>
            <person name="Ussery D."/>
            <person name="Barrell B.G."/>
            <person name="Nurse P."/>
        </authorList>
    </citation>
    <scope>NUCLEOTIDE SEQUENCE [LARGE SCALE GENOMIC DNA]</scope>
    <source>
        <strain>972 / ATCC 24843</strain>
    </source>
</reference>
<reference key="2">
    <citation type="journal article" date="2005" name="Genes Dev.">
        <title>A Rik1-associated, cullin-dependent E3 ubiquitin ligase is essential for heterochromatin formation.</title>
        <authorList>
            <person name="Horn P.J."/>
            <person name="Bastie J.-N."/>
            <person name="Peterson C.L."/>
        </authorList>
    </citation>
    <scope>PARTIAL PROTEIN SEQUENCE</scope>
    <scope>FUNCTION</scope>
    <scope>IDENTIFICATION IN THE RIK1-ASSOCIATED E3 UBIQUITIN LIGASE COMPLEX</scope>
    <scope>SUBCELLULAR LOCATION</scope>
</reference>
<reference key="3">
    <citation type="journal article" date="2005" name="Curr. Biol.">
        <title>Two novel proteins, dos1 and dos2, interact with rik1 to regulate heterochromatic RNA interference and histone modification.</title>
        <authorList>
            <person name="Li F."/>
            <person name="Goto D.B."/>
            <person name="Zaratiegui M."/>
            <person name="Tang X."/>
            <person name="Martienssen R."/>
            <person name="Cande W.Z."/>
        </authorList>
    </citation>
    <scope>FUNCTION</scope>
    <scope>SUBCELLULAR LOCATION</scope>
</reference>
<reference key="4">
    <citation type="journal article" date="2005" name="Genetics">
        <title>The Clr7 and Clr8 directionality factors and the Pcu4 cullin mediate heterochromatin formation in the fission yeast Schizosaccharomyces pombe.</title>
        <authorList>
            <person name="Thon G."/>
            <person name="Hansen K.R."/>
            <person name="Altes S.P."/>
            <person name="Sidhu D."/>
            <person name="Singh G."/>
            <person name="Verhein-Hansen J."/>
            <person name="Bonaduce M.J."/>
            <person name="Klar A.J."/>
        </authorList>
    </citation>
    <scope>FUNCTION</scope>
    <scope>INTERACTION WITH CUL4</scope>
</reference>
<reference key="5">
    <citation type="journal article" date="2006" name="Nat. Biotechnol.">
        <title>ORFeome cloning and global analysis of protein localization in the fission yeast Schizosaccharomyces pombe.</title>
        <authorList>
            <person name="Matsuyama A."/>
            <person name="Arai R."/>
            <person name="Yashiroda Y."/>
            <person name="Shirai A."/>
            <person name="Kamata A."/>
            <person name="Sekido S."/>
            <person name="Kobayashi Y."/>
            <person name="Hashimoto A."/>
            <person name="Hamamoto M."/>
            <person name="Hiraoka Y."/>
            <person name="Horinouchi S."/>
            <person name="Yoshida M."/>
        </authorList>
    </citation>
    <scope>SUBCELLULAR LOCATION [LARGE SCALE ANALYSIS]</scope>
</reference>
<reference key="6">
    <citation type="journal article" date="2008" name="Nat. Struct. Mol. Biol.">
        <title>Roles of the Clr4 methyltransferase complex in nucleation, spreading and maintenance of heterochromatin.</title>
        <authorList>
            <person name="Zhang K."/>
            <person name="Mosch K."/>
            <person name="Fischle W."/>
            <person name="Grewal S.I."/>
        </authorList>
    </citation>
    <scope>FUNCTION</scope>
    <scope>SUBCELLULAR LOCATION</scope>
</reference>
<reference key="7">
    <citation type="journal article" date="2019" name="EMBO Rep.">
        <title>H3K14 ubiquitylation promotes H3K9 methylation for heterochromatin assembly.</title>
        <authorList>
            <person name="Oya E."/>
            <person name="Nakagawa R."/>
            <person name="Yoshimura Y."/>
            <person name="Tanaka M."/>
            <person name="Nishibuchi G."/>
            <person name="Machida S."/>
            <person name="Shirai A."/>
            <person name="Ekwall K."/>
            <person name="Kurumizaka H."/>
            <person name="Tagami H."/>
            <person name="Nakayama J.I."/>
        </authorList>
    </citation>
    <scope>FUNCTION</scope>
</reference>
<proteinExistence type="evidence at protein level"/>
<gene>
    <name type="primary">raf2</name>
    <name type="synonym">clr7</name>
    <name type="synonym">cmc2</name>
    <name type="synonym">dos2</name>
    <name type="ORF">SPCC970.07c</name>
</gene>
<accession>O74560</accession>
<sequence>MPPVRAEKKRKTDLIEQVCVTNKAGELVDLEDVLEYGPYSLTGILSSEKDEQEPLFDESIVLGYSIKISPVWTYNLKDVPEKETMSIWIVTPQRRYGILSPSSEYKAIYEQISEKNRLFYLIKTKFKDDMISGTLEDYDNYIEVLKEKLELPSCFQAILLVQKHIRFLLTQMVATSSLHVWSESPFFIRIRSSYEHLILQINKNIYNARQERKKSKLSSNNPSDNNTTMKSSLNQALTLINLPEQPFSISSPTATPQLGVVKRTSPLRFPLNDIWLSGLRIVDPNIESISLWKRIQVSTSPKHQRYISLQEVCSVIAQQLQITNLEALNKLSSHGETLLQIMHTAFTWRGTKLFNDIKHAIGFRSSVQQARSQFRGYCYDYLFMHCNNGEKTSLHLLRTLICMKLDFSNAQLAAKILFHFLLFDIGSGLSGSDYTYEQYINHSAVAFSFTEEIFEKNFVTVLPDFVKLFSISFGYWPAFSFYDELLKLLRNKYPKVYSSTPNLCDQVWLDRTNLFPCNRSTRSTLPYRPTKLLDLASASSCLSKKETDFKQDTGLYSYNLEKVEALKVSPDLQTGIWSCPVQNCLYFAVCDNPYKPSQVIYDHLLGHVDSKFIFKTPSNSVRSFTNKLEHIMYNIN</sequence>
<evidence type="ECO:0000269" key="1">
    <source>
    </source>
</evidence>
<evidence type="ECO:0000269" key="2">
    <source>
    </source>
</evidence>
<evidence type="ECO:0000269" key="3">
    <source>
    </source>
</evidence>
<evidence type="ECO:0000269" key="4">
    <source>
    </source>
</evidence>
<evidence type="ECO:0000269" key="5">
    <source>
    </source>
</evidence>
<evidence type="ECO:0000269" key="6">
    <source>
    </source>
</evidence>
<dbReference type="EMBL" id="CU329672">
    <property type="protein sequence ID" value="CAA20700.1"/>
    <property type="molecule type" value="Genomic_DNA"/>
</dbReference>
<dbReference type="PIR" id="T41673">
    <property type="entry name" value="T41673"/>
</dbReference>
<dbReference type="RefSeq" id="NP_587848.1">
    <property type="nucleotide sequence ID" value="NM_001022841.2"/>
</dbReference>
<dbReference type="BioGRID" id="275985">
    <property type="interactions" value="255"/>
</dbReference>
<dbReference type="ComplexPortal" id="CPX-9241">
    <property type="entry name" value="CLR4 E3 ubiquitin ligase/methyltransferase complex"/>
</dbReference>
<dbReference type="DIP" id="DIP-37848N"/>
<dbReference type="FunCoup" id="O74560">
    <property type="interactions" value="15"/>
</dbReference>
<dbReference type="IntAct" id="O74560">
    <property type="interactions" value="6"/>
</dbReference>
<dbReference type="STRING" id="284812.O74560"/>
<dbReference type="iPTMnet" id="O74560"/>
<dbReference type="PaxDb" id="4896-SPCC970.07c.1"/>
<dbReference type="EnsemblFungi" id="SPCC970.07c.1">
    <property type="protein sequence ID" value="SPCC970.07c.1:pep"/>
    <property type="gene ID" value="SPCC970.07c"/>
</dbReference>
<dbReference type="GeneID" id="2539420"/>
<dbReference type="KEGG" id="spo:2539420"/>
<dbReference type="PomBase" id="SPCC970.07c">
    <property type="gene designation" value="raf2"/>
</dbReference>
<dbReference type="VEuPathDB" id="FungiDB:SPCC970.07c"/>
<dbReference type="HOGENOM" id="CLU_430309_0_0_1"/>
<dbReference type="InParanoid" id="O74560"/>
<dbReference type="OMA" id="HIWAESP"/>
<dbReference type="PRO" id="PR:O74560"/>
<dbReference type="Proteomes" id="UP000002485">
    <property type="component" value="Chromosome III"/>
</dbReference>
<dbReference type="GO" id="GO:0043494">
    <property type="term" value="C:CLRC complex"/>
    <property type="evidence" value="ECO:0000314"/>
    <property type="project" value="PomBase"/>
</dbReference>
<dbReference type="GO" id="GO:0005737">
    <property type="term" value="C:cytoplasm"/>
    <property type="evidence" value="ECO:0000314"/>
    <property type="project" value="PomBase"/>
</dbReference>
<dbReference type="GO" id="GO:1990342">
    <property type="term" value="C:heterochromatin island"/>
    <property type="evidence" value="ECO:0000314"/>
    <property type="project" value="PomBase"/>
</dbReference>
<dbReference type="GO" id="GO:0031934">
    <property type="term" value="C:mating-type region heterochromatin"/>
    <property type="evidence" value="ECO:0000314"/>
    <property type="project" value="PomBase"/>
</dbReference>
<dbReference type="GO" id="GO:0005739">
    <property type="term" value="C:mitochondrion"/>
    <property type="evidence" value="ECO:0007669"/>
    <property type="project" value="UniProtKB-SubCell"/>
</dbReference>
<dbReference type="GO" id="GO:0005634">
    <property type="term" value="C:nucleus"/>
    <property type="evidence" value="ECO:0000314"/>
    <property type="project" value="PomBase"/>
</dbReference>
<dbReference type="GO" id="GO:0005721">
    <property type="term" value="C:pericentric heterochromatin"/>
    <property type="evidence" value="ECO:0000314"/>
    <property type="project" value="PomBase"/>
</dbReference>
<dbReference type="GO" id="GO:0033553">
    <property type="term" value="C:rDNA heterochromatin"/>
    <property type="evidence" value="ECO:0000314"/>
    <property type="project" value="PomBase"/>
</dbReference>
<dbReference type="GO" id="GO:0140720">
    <property type="term" value="C:subtelomeric heterochromatin"/>
    <property type="evidence" value="ECO:0000314"/>
    <property type="project" value="PomBase"/>
</dbReference>
<dbReference type="GO" id="GO:0034080">
    <property type="term" value="P:CENP-A containing chromatin assembly"/>
    <property type="evidence" value="ECO:0000315"/>
    <property type="project" value="PomBase"/>
</dbReference>
<dbReference type="GO" id="GO:0030466">
    <property type="term" value="P:silent mating-type cassette heterochromatin formation"/>
    <property type="evidence" value="ECO:0000315"/>
    <property type="project" value="PomBase"/>
</dbReference>
<dbReference type="GO" id="GO:0140727">
    <property type="term" value="P:siRNA-mediated pericentric heterochromatin formation"/>
    <property type="evidence" value="ECO:0000315"/>
    <property type="project" value="PomBase"/>
</dbReference>
<dbReference type="GO" id="GO:0031509">
    <property type="term" value="P:subtelomeric heterochromatin formation"/>
    <property type="evidence" value="ECO:0000315"/>
    <property type="project" value="PomBase"/>
</dbReference>
<dbReference type="InterPro" id="IPR022702">
    <property type="entry name" value="Cytosine_MeTrfase1_RFD"/>
</dbReference>
<dbReference type="Pfam" id="PF12047">
    <property type="entry name" value="DNMT1-RFD"/>
    <property type="match status" value="1"/>
</dbReference>
<protein>
    <recommendedName>
        <fullName>Rik1-associated factor 2</fullName>
    </recommendedName>
    <alternativeName>
        <fullName>Cryptic loci regulator 7</fullName>
    </alternativeName>
    <alternativeName>
        <fullName>De-localization of swi6 protein 2</fullName>
    </alternativeName>
</protein>